<organism>
    <name type="scientific">Saccharomyces cerevisiae (strain ATCC 204508 / S288c)</name>
    <name type="common">Baker's yeast</name>
    <dbReference type="NCBI Taxonomy" id="559292"/>
    <lineage>
        <taxon>Eukaryota</taxon>
        <taxon>Fungi</taxon>
        <taxon>Dikarya</taxon>
        <taxon>Ascomycota</taxon>
        <taxon>Saccharomycotina</taxon>
        <taxon>Saccharomycetes</taxon>
        <taxon>Saccharomycetales</taxon>
        <taxon>Saccharomycetaceae</taxon>
        <taxon>Saccharomyces</taxon>
    </lineage>
</organism>
<keyword id="KW-1003">Cell membrane</keyword>
<keyword id="KW-0472">Membrane</keyword>
<keyword id="KW-0597">Phosphoprotein</keyword>
<keyword id="KW-1185">Reference proteome</keyword>
<keyword id="KW-0812">Transmembrane</keyword>
<keyword id="KW-1133">Transmembrane helix</keyword>
<keyword id="KW-0813">Transport</keyword>
<sequence>MSFSSIVSKFLRYLEIPAKNRTAVNFLRNPDLQPIKSANQTWGFWSNLAYWGAVSFTAGTWMSGSAALSVGLSYPETIVSFLLGNVLTIIFTMANSYPGYDWKIGFTLAQRFVFGIYGSAFGIIIRILMSIVNYGSNAWLGGLSINMILDSWSHHYLHLPNTLSPSVAMTTKQLVGFIIFHVLTALCYFMKPYHMNYLLIWSCVATCFAMLGIVIYLTKNAHGVGELFTSTKSTVTGSKRAWAWVYMISYWFGSISPGSTNQSDYSRFGSSNLAIWTGSVCALLIPATLVPIFGVISASTCDKLYGKQFWMPMDIFDYWLTNNYSAGARAGAFFCGLCFTMSQMSSTISNCGFATGMDMAGLLPKYVDIKRGALFCACISWACLPWNFYNSSSTFLTVMSSFGVVMTPIIAVMICDNFLIRKRQYSITNAFILKGEYYFTKGVNWRAIVAWVCGMAPGLPGIAWEVNNNYFHDSGIVKFFYGDSFFSFLISFFVYWGLCVFFPFKITVRHDDKDYYGAFTDEEARKKGMIPYSEISEEEIRAYTLGECYTTGHEYKPESSDNESPELIKTSSENTNVFEIVHQKDDEKHSFSTTQQVV</sequence>
<protein>
    <recommendedName>
        <fullName>Nicotinamide riboside transporter 1</fullName>
    </recommendedName>
    <alternativeName>
        <fullName>Thiamine transport protein 71</fullName>
    </alternativeName>
</protein>
<accession>Q08485</accession>
<accession>D6W2D4</accession>
<accession>O00029</accession>
<reference key="1">
    <citation type="journal article" date="1997" name="Yeast">
        <title>The sequence of a 54.7 kb fragment of yeast chromosome XV reveals the presence of two tRNAs and 24 new open reading frames.</title>
        <authorList>
            <person name="Valens M."/>
            <person name="Bohn C."/>
            <person name="Daignan-Fornier B."/>
            <person name="Dang V.-D."/>
            <person name="Bolotin-Fukuhara M."/>
        </authorList>
    </citation>
    <scope>NUCLEOTIDE SEQUENCE [GENOMIC DNA]</scope>
</reference>
<reference key="2">
    <citation type="journal article" date="1997" name="Nature">
        <title>The nucleotide sequence of Saccharomyces cerevisiae chromosome XV.</title>
        <authorList>
            <person name="Dujon B."/>
            <person name="Albermann K."/>
            <person name="Aldea M."/>
            <person name="Alexandraki D."/>
            <person name="Ansorge W."/>
            <person name="Arino J."/>
            <person name="Benes V."/>
            <person name="Bohn C."/>
            <person name="Bolotin-Fukuhara M."/>
            <person name="Bordonne R."/>
            <person name="Boyer J."/>
            <person name="Camasses A."/>
            <person name="Casamayor A."/>
            <person name="Casas C."/>
            <person name="Cheret G."/>
            <person name="Cziepluch C."/>
            <person name="Daignan-Fornier B."/>
            <person name="Dang V.-D."/>
            <person name="de Haan M."/>
            <person name="Delius H."/>
            <person name="Durand P."/>
            <person name="Fairhead C."/>
            <person name="Feldmann H."/>
            <person name="Gaillon L."/>
            <person name="Galisson F."/>
            <person name="Gamo F.-J."/>
            <person name="Gancedo C."/>
            <person name="Goffeau A."/>
            <person name="Goulding S.E."/>
            <person name="Grivell L.A."/>
            <person name="Habbig B."/>
            <person name="Hand N.J."/>
            <person name="Hani J."/>
            <person name="Hattenhorst U."/>
            <person name="Hebling U."/>
            <person name="Hernando Y."/>
            <person name="Herrero E."/>
            <person name="Heumann K."/>
            <person name="Hiesel R."/>
            <person name="Hilger F."/>
            <person name="Hofmann B."/>
            <person name="Hollenberg C.P."/>
            <person name="Hughes B."/>
            <person name="Jauniaux J.-C."/>
            <person name="Kalogeropoulos A."/>
            <person name="Katsoulou C."/>
            <person name="Kordes E."/>
            <person name="Lafuente M.J."/>
            <person name="Landt O."/>
            <person name="Louis E.J."/>
            <person name="Maarse A.C."/>
            <person name="Madania A."/>
            <person name="Mannhaupt G."/>
            <person name="Marck C."/>
            <person name="Martin R.P."/>
            <person name="Mewes H.-W."/>
            <person name="Michaux G."/>
            <person name="Paces V."/>
            <person name="Parle-McDermott A.G."/>
            <person name="Pearson B.M."/>
            <person name="Perrin A."/>
            <person name="Pettersson B."/>
            <person name="Poch O."/>
            <person name="Pohl T.M."/>
            <person name="Poirey R."/>
            <person name="Portetelle D."/>
            <person name="Pujol A."/>
            <person name="Purnelle B."/>
            <person name="Ramezani Rad M."/>
            <person name="Rechmann S."/>
            <person name="Schwager C."/>
            <person name="Schweizer M."/>
            <person name="Sor F."/>
            <person name="Sterky F."/>
            <person name="Tarassov I.A."/>
            <person name="Teodoru C."/>
            <person name="Tettelin H."/>
            <person name="Thierry A."/>
            <person name="Tobiasch E."/>
            <person name="Tzermia M."/>
            <person name="Uhlen M."/>
            <person name="Unseld M."/>
            <person name="Valens M."/>
            <person name="Vandenbol M."/>
            <person name="Vetter I."/>
            <person name="Vlcek C."/>
            <person name="Voet M."/>
            <person name="Volckaert G."/>
            <person name="Voss H."/>
            <person name="Wambutt R."/>
            <person name="Wedler H."/>
            <person name="Wiemann S."/>
            <person name="Winsor B."/>
            <person name="Wolfe K.H."/>
            <person name="Zollner A."/>
            <person name="Zumstein E."/>
            <person name="Kleine K."/>
        </authorList>
    </citation>
    <scope>NUCLEOTIDE SEQUENCE [LARGE SCALE GENOMIC DNA]</scope>
    <source>
        <strain>ATCC 204508 / S288c</strain>
    </source>
</reference>
<reference key="3">
    <citation type="journal article" date="2014" name="G3 (Bethesda)">
        <title>The reference genome sequence of Saccharomyces cerevisiae: Then and now.</title>
        <authorList>
            <person name="Engel S.R."/>
            <person name="Dietrich F.S."/>
            <person name="Fisk D.G."/>
            <person name="Binkley G."/>
            <person name="Balakrishnan R."/>
            <person name="Costanzo M.C."/>
            <person name="Dwight S.S."/>
            <person name="Hitz B.C."/>
            <person name="Karra K."/>
            <person name="Nash R.S."/>
            <person name="Weng S."/>
            <person name="Wong E.D."/>
            <person name="Lloyd P."/>
            <person name="Skrzypek M.S."/>
            <person name="Miyasato S.R."/>
            <person name="Simison M."/>
            <person name="Cherry J.M."/>
        </authorList>
    </citation>
    <scope>GENOME REANNOTATION</scope>
    <source>
        <strain>ATCC 204508 / S288c</strain>
    </source>
</reference>
<reference key="4">
    <citation type="journal article" date="1997" name="J. Biol. Chem.">
        <title>Isolation and characterization of a thiamin transport gene, THI10, from Saccharomyces cerevisiae.</title>
        <authorList>
            <person name="Enjo F."/>
            <person name="Nosaka K."/>
            <person name="Ogata M."/>
            <person name="Iwashima A."/>
            <person name="Nishimura H."/>
        </authorList>
    </citation>
    <scope>FUNCTION</scope>
</reference>
<reference key="5">
    <citation type="journal article" date="2006" name="Mol. Genet. Genomics">
        <title>Pdc2 coordinates expression of the THI regulon in the yeast Saccharomyces cerevisiae.</title>
        <authorList>
            <person name="Mojzita D."/>
            <person name="Hohmann S."/>
        </authorList>
    </citation>
    <scope>FUNCTION</scope>
</reference>
<reference key="6">
    <citation type="journal article" date="2006" name="Yeast">
        <title>Various cytosine/adenine permease homologues are involved in the toxicity of 5-fluorocytosine in Saccharomyces cerevisiae.</title>
        <authorList>
            <person name="Paluszynski J.P."/>
            <person name="Klassen R."/>
            <person name="Rohe M."/>
            <person name="Meinhardt F."/>
        </authorList>
    </citation>
    <scope>FUNCTION</scope>
</reference>
<reference key="7">
    <citation type="journal article" date="2008" name="J. Biol. Chem.">
        <title>Saccharomyces cerevisiae YOR071C encodes the high affinity nicotinamide riboside transporter Nrt1.</title>
        <authorList>
            <person name="Belenky P.A."/>
            <person name="Moga T.G."/>
            <person name="Brenner C."/>
        </authorList>
    </citation>
    <scope>FUNCTION</scope>
    <scope>BIOPHYSICOCHEMICAL PROPERTIES</scope>
    <scope>INDUCTION</scope>
</reference>
<reference key="8">
    <citation type="journal article" date="2008" name="Mol. Cell. Proteomics">
        <title>A multidimensional chromatography technology for in-depth phosphoproteome analysis.</title>
        <authorList>
            <person name="Albuquerque C.P."/>
            <person name="Smolka M.B."/>
            <person name="Payne S.H."/>
            <person name="Bafna V."/>
            <person name="Eng J."/>
            <person name="Zhou H."/>
        </authorList>
    </citation>
    <scope>IDENTIFICATION BY MASS SPECTROMETRY [LARGE SCALE ANALYSIS]</scope>
</reference>
<reference key="9">
    <citation type="journal article" date="2009" name="J. Biol. Chem.">
        <title>Assimilation of endogenous nicotinamide riboside is essential for calorie restriction-mediated life span extension in Saccharomyces cerevisiae.</title>
        <authorList>
            <person name="Lu S.P."/>
            <person name="Kato M."/>
            <person name="Lin S.J."/>
        </authorList>
    </citation>
    <scope>FUNCTION</scope>
</reference>
<reference key="10">
    <citation type="journal article" date="2009" name="Science">
        <title>Global analysis of Cdk1 substrate phosphorylation sites provides insights into evolution.</title>
        <authorList>
            <person name="Holt L.J."/>
            <person name="Tuch B.B."/>
            <person name="Villen J."/>
            <person name="Johnson A.D."/>
            <person name="Gygi S.P."/>
            <person name="Morgan D.O."/>
        </authorList>
    </citation>
    <scope>PHOSPHORYLATION [LARGE SCALE ANALYSIS] AT SER-560 AND SER-572</scope>
    <scope>IDENTIFICATION BY MASS SPECTROMETRY [LARGE SCALE ANALYSIS]</scope>
</reference>
<reference key="11">
    <citation type="journal article" date="2011" name="J. Biol. Chem.">
        <title>Phosphate responsive signaling pathway is a novel component of NAD+ metabolism in Saccharomyces cerevisiae.</title>
        <authorList>
            <person name="Lu S.P."/>
            <person name="Lin S.J."/>
        </authorList>
    </citation>
    <scope>FUNCTION</scope>
</reference>
<evidence type="ECO:0000250" key="1"/>
<evidence type="ECO:0000255" key="2"/>
<evidence type="ECO:0000269" key="3">
    <source>
    </source>
</evidence>
<evidence type="ECO:0000269" key="4">
    <source>
    </source>
</evidence>
<evidence type="ECO:0000269" key="5">
    <source>
    </source>
</evidence>
<evidence type="ECO:0000269" key="6">
    <source>
    </source>
</evidence>
<evidence type="ECO:0000269" key="7">
    <source>
    </source>
</evidence>
<evidence type="ECO:0000269" key="8">
    <source>
    </source>
</evidence>
<evidence type="ECO:0000305" key="9"/>
<evidence type="ECO:0007744" key="10">
    <source>
    </source>
</evidence>
<comment type="function">
    <text evidence="3 4 5 6 7 8">High-affinity pH-dependent nicotinamide riboside transporter which also transports thiamine with low affinity. Involved in 5-fluorocytosine sensitivity.</text>
</comment>
<comment type="biophysicochemical properties">
    <kinetics>
        <KM evidence="5">21 uM for nicotinamide riboside</KM>
    </kinetics>
    <phDependence>
        <text evidence="5">Optimum pH is 3.5-6.5.</text>
    </phDependence>
</comment>
<comment type="subcellular location">
    <subcellularLocation>
        <location evidence="1">Cell membrane</location>
        <topology evidence="1">Multi-pass membrane protein</topology>
    </subcellularLocation>
</comment>
<comment type="induction">
    <text evidence="5">Expression is controlled by the transcription repressors SUM1, HST1 and RFM1.</text>
</comment>
<comment type="similarity">
    <text evidence="9">Belongs to the purine-cytosine permease (2.A.39) family.</text>
</comment>
<gene>
    <name type="primary">NRT1</name>
    <name type="synonym">THI71</name>
    <name type="ordered locus">YOR071C</name>
    <name type="ORF">YOR29-22</name>
</gene>
<name>NRT1_YEAST</name>
<dbReference type="EMBL" id="Z70678">
    <property type="protein sequence ID" value="CAA94556.1"/>
    <property type="molecule type" value="Genomic_DNA"/>
</dbReference>
<dbReference type="EMBL" id="Z74979">
    <property type="protein sequence ID" value="CAA99264.1"/>
    <property type="molecule type" value="Genomic_DNA"/>
</dbReference>
<dbReference type="EMBL" id="BK006948">
    <property type="protein sequence ID" value="DAA10850.1"/>
    <property type="molecule type" value="Genomic_DNA"/>
</dbReference>
<dbReference type="PIR" id="S66954">
    <property type="entry name" value="S66954"/>
</dbReference>
<dbReference type="RefSeq" id="NP_014714.1">
    <property type="nucleotide sequence ID" value="NM_001183490.1"/>
</dbReference>
<dbReference type="SMR" id="Q08485"/>
<dbReference type="BioGRID" id="34470">
    <property type="interactions" value="75"/>
</dbReference>
<dbReference type="DIP" id="DIP-7934N"/>
<dbReference type="FunCoup" id="Q08485">
    <property type="interactions" value="62"/>
</dbReference>
<dbReference type="IntAct" id="Q08485">
    <property type="interactions" value="1"/>
</dbReference>
<dbReference type="MINT" id="Q08485"/>
<dbReference type="STRING" id="4932.YOR071C"/>
<dbReference type="TCDB" id="2.A.39.4.2">
    <property type="family name" value="the nucleobase:cation symporter-1 (ncs1) family"/>
</dbReference>
<dbReference type="iPTMnet" id="Q08485"/>
<dbReference type="PaxDb" id="4932-YOR071C"/>
<dbReference type="PeptideAtlas" id="Q08485"/>
<dbReference type="EnsemblFungi" id="YOR071C_mRNA">
    <property type="protein sequence ID" value="YOR071C"/>
    <property type="gene ID" value="YOR071C"/>
</dbReference>
<dbReference type="GeneID" id="854237"/>
<dbReference type="KEGG" id="sce:YOR071C"/>
<dbReference type="AGR" id="SGD:S000005597"/>
<dbReference type="SGD" id="S000005597">
    <property type="gene designation" value="NRT1"/>
</dbReference>
<dbReference type="VEuPathDB" id="FungiDB:YOR071C"/>
<dbReference type="eggNOG" id="KOG2466">
    <property type="taxonomic scope" value="Eukaryota"/>
</dbReference>
<dbReference type="GeneTree" id="ENSGT00940000176299"/>
<dbReference type="HOGENOM" id="CLU_021555_3_0_1"/>
<dbReference type="InParanoid" id="Q08485"/>
<dbReference type="OMA" id="WEVNNNY"/>
<dbReference type="OrthoDB" id="2018619at2759"/>
<dbReference type="BioCyc" id="YEAST:G3O-33610-MONOMER"/>
<dbReference type="BioGRID-ORCS" id="854237">
    <property type="hits" value="0 hits in 10 CRISPR screens"/>
</dbReference>
<dbReference type="PRO" id="PR:Q08485"/>
<dbReference type="Proteomes" id="UP000002311">
    <property type="component" value="Chromosome XV"/>
</dbReference>
<dbReference type="RNAct" id="Q08485">
    <property type="molecule type" value="protein"/>
</dbReference>
<dbReference type="GO" id="GO:0005886">
    <property type="term" value="C:plasma membrane"/>
    <property type="evidence" value="ECO:0000250"/>
    <property type="project" value="SGD"/>
</dbReference>
<dbReference type="GO" id="GO:1903089">
    <property type="term" value="F:5-amino-1-ribofuranosylimidazole-4-carboxamide transmembrane transporter activity"/>
    <property type="evidence" value="ECO:0000315"/>
    <property type="project" value="SGD"/>
</dbReference>
<dbReference type="GO" id="GO:0034257">
    <property type="term" value="F:nicotinamide riboside transmembrane transporter activity"/>
    <property type="evidence" value="ECO:0000315"/>
    <property type="project" value="SGD"/>
</dbReference>
<dbReference type="GO" id="GO:0015205">
    <property type="term" value="F:nucleobase transmembrane transporter activity"/>
    <property type="evidence" value="ECO:0000318"/>
    <property type="project" value="GO_Central"/>
</dbReference>
<dbReference type="GO" id="GO:1903088">
    <property type="term" value="P:5-amino-1-ribofuranosylimidazole-4-carboxamide transmembrane transport"/>
    <property type="evidence" value="ECO:0000315"/>
    <property type="project" value="SGD"/>
</dbReference>
<dbReference type="GO" id="GO:0034258">
    <property type="term" value="P:nicotinamide riboside transport"/>
    <property type="evidence" value="ECO:0000315"/>
    <property type="project" value="SGD"/>
</dbReference>
<dbReference type="GO" id="GO:0015851">
    <property type="term" value="P:nucleobase transport"/>
    <property type="evidence" value="ECO:0000318"/>
    <property type="project" value="GO_Central"/>
</dbReference>
<dbReference type="GO" id="GO:0015888">
    <property type="term" value="P:thiamine transport"/>
    <property type="evidence" value="ECO:0000316"/>
    <property type="project" value="SGD"/>
</dbReference>
<dbReference type="CDD" id="cd11482">
    <property type="entry name" value="SLC-NCS1sbd_NRT1-like"/>
    <property type="match status" value="1"/>
</dbReference>
<dbReference type="FunFam" id="1.10.4160.10:FF:000005">
    <property type="entry name" value="Thiamine transporter"/>
    <property type="match status" value="1"/>
</dbReference>
<dbReference type="Gene3D" id="1.10.4160.10">
    <property type="entry name" value="Hydantoin permease"/>
    <property type="match status" value="1"/>
</dbReference>
<dbReference type="InterPro" id="IPR012681">
    <property type="entry name" value="NCS1"/>
</dbReference>
<dbReference type="InterPro" id="IPR001248">
    <property type="entry name" value="Pur-cyt_permease"/>
</dbReference>
<dbReference type="InterPro" id="IPR045225">
    <property type="entry name" value="Uracil/uridine/allantoin_perm"/>
</dbReference>
<dbReference type="NCBIfam" id="TIGR00800">
    <property type="entry name" value="ncs1"/>
    <property type="match status" value="1"/>
</dbReference>
<dbReference type="PANTHER" id="PTHR30618">
    <property type="entry name" value="NCS1 FAMILY PURINE/PYRIMIDINE TRANSPORTER"/>
    <property type="match status" value="1"/>
</dbReference>
<dbReference type="PANTHER" id="PTHR30618:SF15">
    <property type="entry name" value="NICOTINAMIDE RIBOSIDE TRANSPORTER 1-RELATED"/>
    <property type="match status" value="1"/>
</dbReference>
<dbReference type="Pfam" id="PF02133">
    <property type="entry name" value="Transp_cyt_pur"/>
    <property type="match status" value="1"/>
</dbReference>
<proteinExistence type="evidence at protein level"/>
<feature type="chain" id="PRO_0000197927" description="Nicotinamide riboside transporter 1">
    <location>
        <begin position="1"/>
        <end position="598"/>
    </location>
</feature>
<feature type="transmembrane region" description="Helical" evidence="2">
    <location>
        <begin position="48"/>
        <end position="68"/>
    </location>
</feature>
<feature type="transmembrane region" description="Helical" evidence="2">
    <location>
        <begin position="71"/>
        <end position="91"/>
    </location>
</feature>
<feature type="transmembrane region" description="Helical" evidence="2">
    <location>
        <begin position="112"/>
        <end position="132"/>
    </location>
</feature>
<feature type="transmembrane region" description="Helical" evidence="2">
    <location>
        <begin position="174"/>
        <end position="194"/>
    </location>
</feature>
<feature type="transmembrane region" description="Helical" evidence="2">
    <location>
        <begin position="197"/>
        <end position="217"/>
    </location>
</feature>
<feature type="transmembrane region" description="Helical" evidence="2">
    <location>
        <begin position="241"/>
        <end position="261"/>
    </location>
</feature>
<feature type="transmembrane region" description="Helical" evidence="2">
    <location>
        <begin position="273"/>
        <end position="293"/>
    </location>
</feature>
<feature type="transmembrane region" description="Helical" evidence="2">
    <location>
        <begin position="372"/>
        <end position="392"/>
    </location>
</feature>
<feature type="transmembrane region" description="Helical" evidence="2">
    <location>
        <begin position="395"/>
        <end position="415"/>
    </location>
</feature>
<feature type="transmembrane region" description="Helical" evidence="2">
    <location>
        <begin position="447"/>
        <end position="467"/>
    </location>
</feature>
<feature type="transmembrane region" description="Helical" evidence="2">
    <location>
        <begin position="484"/>
        <end position="504"/>
    </location>
</feature>
<feature type="modified residue" description="Phosphoserine" evidence="10">
    <location>
        <position position="560"/>
    </location>
</feature>
<feature type="modified residue" description="Phosphoserine" evidence="10">
    <location>
        <position position="572"/>
    </location>
</feature>